<feature type="chain" id="PRO_1000049979" description="Gamma-glutamyl phosphate reductase">
    <location>
        <begin position="1"/>
        <end position="436"/>
    </location>
</feature>
<evidence type="ECO:0000255" key="1">
    <source>
        <dbReference type="HAMAP-Rule" id="MF_00412"/>
    </source>
</evidence>
<dbReference type="EC" id="1.2.1.41" evidence="1"/>
<dbReference type="EMBL" id="CP000552">
    <property type="protein sequence ID" value="ABM71864.1"/>
    <property type="molecule type" value="Genomic_DNA"/>
</dbReference>
<dbReference type="RefSeq" id="WP_011819969.1">
    <property type="nucleotide sequence ID" value="NC_008817.1"/>
</dbReference>
<dbReference type="SMR" id="A2BVQ3"/>
<dbReference type="STRING" id="167542.P9515_06551"/>
<dbReference type="GeneID" id="60201563"/>
<dbReference type="KEGG" id="pmc:P9515_06551"/>
<dbReference type="eggNOG" id="COG0014">
    <property type="taxonomic scope" value="Bacteria"/>
</dbReference>
<dbReference type="HOGENOM" id="CLU_030231_0_1_3"/>
<dbReference type="OrthoDB" id="9809970at2"/>
<dbReference type="UniPathway" id="UPA00098">
    <property type="reaction ID" value="UER00360"/>
</dbReference>
<dbReference type="Proteomes" id="UP000001589">
    <property type="component" value="Chromosome"/>
</dbReference>
<dbReference type="GO" id="GO:0005737">
    <property type="term" value="C:cytoplasm"/>
    <property type="evidence" value="ECO:0007669"/>
    <property type="project" value="UniProtKB-SubCell"/>
</dbReference>
<dbReference type="GO" id="GO:0004350">
    <property type="term" value="F:glutamate-5-semialdehyde dehydrogenase activity"/>
    <property type="evidence" value="ECO:0007669"/>
    <property type="project" value="UniProtKB-UniRule"/>
</dbReference>
<dbReference type="GO" id="GO:0050661">
    <property type="term" value="F:NADP binding"/>
    <property type="evidence" value="ECO:0007669"/>
    <property type="project" value="InterPro"/>
</dbReference>
<dbReference type="GO" id="GO:0055129">
    <property type="term" value="P:L-proline biosynthetic process"/>
    <property type="evidence" value="ECO:0007669"/>
    <property type="project" value="UniProtKB-UniRule"/>
</dbReference>
<dbReference type="CDD" id="cd07079">
    <property type="entry name" value="ALDH_F18-19_ProA-GPR"/>
    <property type="match status" value="1"/>
</dbReference>
<dbReference type="FunFam" id="3.40.309.10:FF:000006">
    <property type="entry name" value="Gamma-glutamyl phosphate reductase"/>
    <property type="match status" value="1"/>
</dbReference>
<dbReference type="Gene3D" id="3.40.605.10">
    <property type="entry name" value="Aldehyde Dehydrogenase, Chain A, domain 1"/>
    <property type="match status" value="1"/>
</dbReference>
<dbReference type="Gene3D" id="3.40.309.10">
    <property type="entry name" value="Aldehyde Dehydrogenase, Chain A, domain 2"/>
    <property type="match status" value="1"/>
</dbReference>
<dbReference type="HAMAP" id="MF_00412">
    <property type="entry name" value="ProA"/>
    <property type="match status" value="1"/>
</dbReference>
<dbReference type="InterPro" id="IPR016161">
    <property type="entry name" value="Ald_DH/histidinol_DH"/>
</dbReference>
<dbReference type="InterPro" id="IPR016163">
    <property type="entry name" value="Ald_DH_C"/>
</dbReference>
<dbReference type="InterPro" id="IPR016162">
    <property type="entry name" value="Ald_DH_N"/>
</dbReference>
<dbReference type="InterPro" id="IPR015590">
    <property type="entry name" value="Aldehyde_DH_dom"/>
</dbReference>
<dbReference type="InterPro" id="IPR012134">
    <property type="entry name" value="Glu-5-SA_DH"/>
</dbReference>
<dbReference type="InterPro" id="IPR000965">
    <property type="entry name" value="GPR_dom"/>
</dbReference>
<dbReference type="NCBIfam" id="NF001221">
    <property type="entry name" value="PRK00197.1"/>
    <property type="match status" value="1"/>
</dbReference>
<dbReference type="NCBIfam" id="TIGR00407">
    <property type="entry name" value="proA"/>
    <property type="match status" value="1"/>
</dbReference>
<dbReference type="PANTHER" id="PTHR11063:SF8">
    <property type="entry name" value="DELTA-1-PYRROLINE-5-CARBOXYLATE SYNTHASE"/>
    <property type="match status" value="1"/>
</dbReference>
<dbReference type="PANTHER" id="PTHR11063">
    <property type="entry name" value="GLUTAMATE SEMIALDEHYDE DEHYDROGENASE"/>
    <property type="match status" value="1"/>
</dbReference>
<dbReference type="Pfam" id="PF00171">
    <property type="entry name" value="Aldedh"/>
    <property type="match status" value="1"/>
</dbReference>
<dbReference type="PIRSF" id="PIRSF000151">
    <property type="entry name" value="GPR"/>
    <property type="match status" value="1"/>
</dbReference>
<dbReference type="SUPFAM" id="SSF53720">
    <property type="entry name" value="ALDH-like"/>
    <property type="match status" value="1"/>
</dbReference>
<reference key="1">
    <citation type="journal article" date="2007" name="PLoS Genet.">
        <title>Patterns and implications of gene gain and loss in the evolution of Prochlorococcus.</title>
        <authorList>
            <person name="Kettler G.C."/>
            <person name="Martiny A.C."/>
            <person name="Huang K."/>
            <person name="Zucker J."/>
            <person name="Coleman M.L."/>
            <person name="Rodrigue S."/>
            <person name="Chen F."/>
            <person name="Lapidus A."/>
            <person name="Ferriera S."/>
            <person name="Johnson J."/>
            <person name="Steglich C."/>
            <person name="Church G.M."/>
            <person name="Richardson P."/>
            <person name="Chisholm S.W."/>
        </authorList>
    </citation>
    <scope>NUCLEOTIDE SEQUENCE [LARGE SCALE GENOMIC DNA]</scope>
    <source>
        <strain>MIT 9515</strain>
    </source>
</reference>
<proteinExistence type="inferred from homology"/>
<sequence length="436" mass="47921">MTDIFEVPSPDNNLLDKAEQLRLASIKTSQTNNNERIRALNLMADSLEKNSKEIIDSNFEDYKKAEIKGISKALLSRLKLSKEKLNLGIEGIRKVGDLSDPLGQIQIKKELSKGLILERKTVPIGVLGVIFESRPDAVMQISSLAIRAGNGVMLKGGSEANFTNQAIVSALKKGLQKSNIDDNAICLLTSRKDSMAMLNLEKFINLIIPRGSNELVKFIQENTGIPVLGHADGICHLYIDDEVNLDIALKVALDSKIQYPAACNAIETLLIHKSIAPAFLKKAIPIFNSNNVKLIGDKKAVKLGVAFEANYEDWQTEYLDLILSIKIVDDLEEGIAHIQKFSSKHTDGIITENISNANKFMSEIDSAGVFHNCSTRFADGFRYGFGAEVGISTQTLPPRGPVGLEGLVTYKYFLRGEGHSVDDFSSGKSIYTHKDL</sequence>
<name>PROA_PROM5</name>
<keyword id="KW-0028">Amino-acid biosynthesis</keyword>
<keyword id="KW-0963">Cytoplasm</keyword>
<keyword id="KW-0521">NADP</keyword>
<keyword id="KW-0560">Oxidoreductase</keyword>
<keyword id="KW-0641">Proline biosynthesis</keyword>
<comment type="function">
    <text evidence="1">Catalyzes the NADPH-dependent reduction of L-glutamate 5-phosphate into L-glutamate 5-semialdehyde and phosphate. The product spontaneously undergoes cyclization to form 1-pyrroline-5-carboxylate.</text>
</comment>
<comment type="catalytic activity">
    <reaction evidence="1">
        <text>L-glutamate 5-semialdehyde + phosphate + NADP(+) = L-glutamyl 5-phosphate + NADPH + H(+)</text>
        <dbReference type="Rhea" id="RHEA:19541"/>
        <dbReference type="ChEBI" id="CHEBI:15378"/>
        <dbReference type="ChEBI" id="CHEBI:43474"/>
        <dbReference type="ChEBI" id="CHEBI:57783"/>
        <dbReference type="ChEBI" id="CHEBI:58066"/>
        <dbReference type="ChEBI" id="CHEBI:58274"/>
        <dbReference type="ChEBI" id="CHEBI:58349"/>
        <dbReference type="EC" id="1.2.1.41"/>
    </reaction>
</comment>
<comment type="pathway">
    <text evidence="1">Amino-acid biosynthesis; L-proline biosynthesis; L-glutamate 5-semialdehyde from L-glutamate: step 2/2.</text>
</comment>
<comment type="subcellular location">
    <subcellularLocation>
        <location evidence="1">Cytoplasm</location>
    </subcellularLocation>
</comment>
<comment type="similarity">
    <text evidence="1">Belongs to the gamma-glutamyl phosphate reductase family.</text>
</comment>
<gene>
    <name evidence="1" type="primary">proA</name>
    <name type="ordered locus">P9515_06551</name>
</gene>
<protein>
    <recommendedName>
        <fullName evidence="1">Gamma-glutamyl phosphate reductase</fullName>
        <shortName evidence="1">GPR</shortName>
        <ecNumber evidence="1">1.2.1.41</ecNumber>
    </recommendedName>
    <alternativeName>
        <fullName evidence="1">Glutamate-5-semialdehyde dehydrogenase</fullName>
    </alternativeName>
    <alternativeName>
        <fullName evidence="1">Glutamyl-gamma-semialdehyde dehydrogenase</fullName>
        <shortName evidence="1">GSA dehydrogenase</shortName>
    </alternativeName>
</protein>
<accession>A2BVQ3</accession>
<organism>
    <name type="scientific">Prochlorococcus marinus (strain MIT 9515)</name>
    <dbReference type="NCBI Taxonomy" id="167542"/>
    <lineage>
        <taxon>Bacteria</taxon>
        <taxon>Bacillati</taxon>
        <taxon>Cyanobacteriota</taxon>
        <taxon>Cyanophyceae</taxon>
        <taxon>Synechococcales</taxon>
        <taxon>Prochlorococcaceae</taxon>
        <taxon>Prochlorococcus</taxon>
    </lineage>
</organism>